<dbReference type="EC" id="2.7.7.60" evidence="1"/>
<dbReference type="EMBL" id="CP000094">
    <property type="protein sequence ID" value="ABA72866.1"/>
    <property type="molecule type" value="Genomic_DNA"/>
</dbReference>
<dbReference type="RefSeq" id="WP_011332698.1">
    <property type="nucleotide sequence ID" value="NC_007492.2"/>
</dbReference>
<dbReference type="SMR" id="Q3KH90"/>
<dbReference type="KEGG" id="pfo:Pfl01_1123"/>
<dbReference type="eggNOG" id="COG1211">
    <property type="taxonomic scope" value="Bacteria"/>
</dbReference>
<dbReference type="HOGENOM" id="CLU_061281_3_1_6"/>
<dbReference type="UniPathway" id="UPA00056">
    <property type="reaction ID" value="UER00093"/>
</dbReference>
<dbReference type="Proteomes" id="UP000002704">
    <property type="component" value="Chromosome"/>
</dbReference>
<dbReference type="GO" id="GO:0050518">
    <property type="term" value="F:2-C-methyl-D-erythritol 4-phosphate cytidylyltransferase activity"/>
    <property type="evidence" value="ECO:0007669"/>
    <property type="project" value="UniProtKB-UniRule"/>
</dbReference>
<dbReference type="GO" id="GO:0019288">
    <property type="term" value="P:isopentenyl diphosphate biosynthetic process, methylerythritol 4-phosphate pathway"/>
    <property type="evidence" value="ECO:0007669"/>
    <property type="project" value="UniProtKB-UniRule"/>
</dbReference>
<dbReference type="CDD" id="cd02516">
    <property type="entry name" value="CDP-ME_synthetase"/>
    <property type="match status" value="1"/>
</dbReference>
<dbReference type="FunFam" id="3.90.550.10:FF:000003">
    <property type="entry name" value="2-C-methyl-D-erythritol 4-phosphate cytidylyltransferase"/>
    <property type="match status" value="1"/>
</dbReference>
<dbReference type="Gene3D" id="3.90.550.10">
    <property type="entry name" value="Spore Coat Polysaccharide Biosynthesis Protein SpsA, Chain A"/>
    <property type="match status" value="1"/>
</dbReference>
<dbReference type="HAMAP" id="MF_00108">
    <property type="entry name" value="IspD"/>
    <property type="match status" value="1"/>
</dbReference>
<dbReference type="InterPro" id="IPR001228">
    <property type="entry name" value="IspD"/>
</dbReference>
<dbReference type="InterPro" id="IPR034683">
    <property type="entry name" value="IspD/TarI"/>
</dbReference>
<dbReference type="InterPro" id="IPR050088">
    <property type="entry name" value="IspD/TarI_cytidylyltransf_bact"/>
</dbReference>
<dbReference type="InterPro" id="IPR018294">
    <property type="entry name" value="ISPD_synthase_CS"/>
</dbReference>
<dbReference type="InterPro" id="IPR029044">
    <property type="entry name" value="Nucleotide-diphossugar_trans"/>
</dbReference>
<dbReference type="NCBIfam" id="TIGR00453">
    <property type="entry name" value="ispD"/>
    <property type="match status" value="1"/>
</dbReference>
<dbReference type="PANTHER" id="PTHR32125">
    <property type="entry name" value="2-C-METHYL-D-ERYTHRITOL 4-PHOSPHATE CYTIDYLYLTRANSFERASE, CHLOROPLASTIC"/>
    <property type="match status" value="1"/>
</dbReference>
<dbReference type="PANTHER" id="PTHR32125:SF4">
    <property type="entry name" value="2-C-METHYL-D-ERYTHRITOL 4-PHOSPHATE CYTIDYLYLTRANSFERASE, CHLOROPLASTIC"/>
    <property type="match status" value="1"/>
</dbReference>
<dbReference type="Pfam" id="PF01128">
    <property type="entry name" value="IspD"/>
    <property type="match status" value="1"/>
</dbReference>
<dbReference type="SUPFAM" id="SSF53448">
    <property type="entry name" value="Nucleotide-diphospho-sugar transferases"/>
    <property type="match status" value="1"/>
</dbReference>
<dbReference type="PROSITE" id="PS01295">
    <property type="entry name" value="ISPD"/>
    <property type="match status" value="1"/>
</dbReference>
<accession>Q3KH90</accession>
<gene>
    <name evidence="1" type="primary">ispD</name>
    <name type="ordered locus">Pfl01_1123</name>
</gene>
<feature type="chain" id="PRO_0000237810" description="2-C-methyl-D-erythritol 4-phosphate cytidylyltransferase">
    <location>
        <begin position="1"/>
        <end position="235"/>
    </location>
</feature>
<feature type="site" description="Transition state stabilizer" evidence="1">
    <location>
        <position position="20"/>
    </location>
</feature>
<feature type="site" description="Transition state stabilizer" evidence="1">
    <location>
        <position position="27"/>
    </location>
</feature>
<feature type="site" description="Positions MEP for the nucleophilic attack" evidence="1">
    <location>
        <position position="161"/>
    </location>
</feature>
<feature type="site" description="Positions MEP for the nucleophilic attack" evidence="1">
    <location>
        <position position="217"/>
    </location>
</feature>
<evidence type="ECO:0000255" key="1">
    <source>
        <dbReference type="HAMAP-Rule" id="MF_00108"/>
    </source>
</evidence>
<organism>
    <name type="scientific">Pseudomonas fluorescens (strain Pf0-1)</name>
    <dbReference type="NCBI Taxonomy" id="205922"/>
    <lineage>
        <taxon>Bacteria</taxon>
        <taxon>Pseudomonadati</taxon>
        <taxon>Pseudomonadota</taxon>
        <taxon>Gammaproteobacteria</taxon>
        <taxon>Pseudomonadales</taxon>
        <taxon>Pseudomonadaceae</taxon>
        <taxon>Pseudomonas</taxon>
    </lineage>
</organism>
<sequence length="235" mass="25841">MIDSLPAFWAVIPAAGVGARMAADRPKQYLQLGGRTILEHSLGCFLDHPSLKGLVVSLAVDDPYWPNLASASDPRIQRVDGGTERSGSVLNALLHLHAQGADDEDWVLVHDAARPNLSRDDLDKLLAELANDPVGGLLAVPAKDTLKRVDKHGRVVETVDRSVIWQAYTPQMFRLGALHRALADSLVAVAVITDEASAMEWAGMAPRLIEGRADNLKVTRPEDLEWLRQRWTNRR</sequence>
<name>ISPD_PSEPF</name>
<comment type="function">
    <text evidence="1">Catalyzes the formation of 4-diphosphocytidyl-2-C-methyl-D-erythritol from CTP and 2-C-methyl-D-erythritol 4-phosphate (MEP).</text>
</comment>
<comment type="catalytic activity">
    <reaction evidence="1">
        <text>2-C-methyl-D-erythritol 4-phosphate + CTP + H(+) = 4-CDP-2-C-methyl-D-erythritol + diphosphate</text>
        <dbReference type="Rhea" id="RHEA:13429"/>
        <dbReference type="ChEBI" id="CHEBI:15378"/>
        <dbReference type="ChEBI" id="CHEBI:33019"/>
        <dbReference type="ChEBI" id="CHEBI:37563"/>
        <dbReference type="ChEBI" id="CHEBI:57823"/>
        <dbReference type="ChEBI" id="CHEBI:58262"/>
        <dbReference type="EC" id="2.7.7.60"/>
    </reaction>
</comment>
<comment type="pathway">
    <text evidence="1">Isoprenoid biosynthesis; isopentenyl diphosphate biosynthesis via DXP pathway; isopentenyl diphosphate from 1-deoxy-D-xylulose 5-phosphate: step 2/6.</text>
</comment>
<comment type="similarity">
    <text evidence="1">Belongs to the IspD/TarI cytidylyltransferase family. IspD subfamily.</text>
</comment>
<reference key="1">
    <citation type="journal article" date="2009" name="Genome Biol.">
        <title>Genomic and genetic analyses of diversity and plant interactions of Pseudomonas fluorescens.</title>
        <authorList>
            <person name="Silby M.W."/>
            <person name="Cerdeno-Tarraga A.M."/>
            <person name="Vernikos G.S."/>
            <person name="Giddens S.R."/>
            <person name="Jackson R.W."/>
            <person name="Preston G.M."/>
            <person name="Zhang X.-X."/>
            <person name="Moon C.D."/>
            <person name="Gehrig S.M."/>
            <person name="Godfrey S.A.C."/>
            <person name="Knight C.G."/>
            <person name="Malone J.G."/>
            <person name="Robinson Z."/>
            <person name="Spiers A.J."/>
            <person name="Harris S."/>
            <person name="Challis G.L."/>
            <person name="Yaxley A.M."/>
            <person name="Harris D."/>
            <person name="Seeger K."/>
            <person name="Murphy L."/>
            <person name="Rutter S."/>
            <person name="Squares R."/>
            <person name="Quail M.A."/>
            <person name="Saunders E."/>
            <person name="Mavromatis K."/>
            <person name="Brettin T.S."/>
            <person name="Bentley S.D."/>
            <person name="Hothersall J."/>
            <person name="Stephens E."/>
            <person name="Thomas C.M."/>
            <person name="Parkhill J."/>
            <person name="Levy S.B."/>
            <person name="Rainey P.B."/>
            <person name="Thomson N.R."/>
        </authorList>
    </citation>
    <scope>NUCLEOTIDE SEQUENCE [LARGE SCALE GENOMIC DNA]</scope>
    <source>
        <strain>Pf0-1</strain>
    </source>
</reference>
<protein>
    <recommendedName>
        <fullName evidence="1">2-C-methyl-D-erythritol 4-phosphate cytidylyltransferase</fullName>
        <ecNumber evidence="1">2.7.7.60</ecNumber>
    </recommendedName>
    <alternativeName>
        <fullName evidence="1">4-diphosphocytidyl-2C-methyl-D-erythritol synthase</fullName>
    </alternativeName>
    <alternativeName>
        <fullName evidence="1">MEP cytidylyltransferase</fullName>
        <shortName evidence="1">MCT</shortName>
    </alternativeName>
</protein>
<proteinExistence type="inferred from homology"/>
<keyword id="KW-0414">Isoprene biosynthesis</keyword>
<keyword id="KW-0548">Nucleotidyltransferase</keyword>
<keyword id="KW-0808">Transferase</keyword>